<evidence type="ECO:0000255" key="1"/>
<evidence type="ECO:0000256" key="2">
    <source>
        <dbReference type="SAM" id="MobiDB-lite"/>
    </source>
</evidence>
<evidence type="ECO:0000305" key="3"/>
<comment type="function">
    <text>May play a role in maintenance and/or transport of vesicles.</text>
</comment>
<comment type="interaction">
    <interactant intactId="EBI-724857">
        <id>Q9GZP1</id>
    </interactant>
    <interactant intactId="EBI-347996">
        <id>O43765</id>
        <label>SGTA</label>
    </interactant>
    <organismsDiffer>false</organismsDiffer>
    <experiments>3</experiments>
</comment>
<comment type="subcellular location">
    <subcellularLocation>
        <location evidence="3">Membrane</location>
        <topology evidence="3">Multi-pass membrane protein</topology>
    </subcellularLocation>
</comment>
<comment type="similarity">
    <text evidence="3">Belongs to the VMP family.</text>
</comment>
<comment type="caution">
    <text evidence="3">It is uncertain whether Met-1 or Met-2 is the initiator.</text>
</comment>
<sequence length="204" mass="21983">MMPSCNRSCSCSRGPSVEDGKWYGVRSYLHLFYEDCAGTALSDDPEGPPVLCPRRPWPSLCWKISLSSGTLLLLLGVAALTTGYAVPPKLEGIGEGEFLVLDQRAADYNQALGTCRLAGTALCVAAGVLLAICLFWAMIGWLSQDTKAEPLDPEADSHVEVFGDEPEQQLSPIFRNASGQSWFSPPASPFGQSSVQTIQPKRDS</sequence>
<feature type="chain" id="PRO_0000221675" description="Neurensin-2">
    <location>
        <begin position="1"/>
        <end position="204"/>
    </location>
</feature>
<feature type="transmembrane region" description="Helical" evidence="1">
    <location>
        <begin position="66"/>
        <end position="86"/>
    </location>
</feature>
<feature type="transmembrane region" description="Helical" evidence="1">
    <location>
        <begin position="122"/>
        <end position="142"/>
    </location>
</feature>
<feature type="region of interest" description="Disordered" evidence="2">
    <location>
        <begin position="178"/>
        <end position="204"/>
    </location>
</feature>
<feature type="compositionally biased region" description="Polar residues" evidence="2">
    <location>
        <begin position="190"/>
        <end position="204"/>
    </location>
</feature>
<feature type="sequence variant" id="VAR_053738" description="In dbSNP:rs11556643.">
    <original>L</original>
    <variation>V</variation>
    <location>
        <position position="41"/>
    </location>
</feature>
<feature type="sequence variant" id="VAR_053739" description="In dbSNP:rs17762763.">
    <original>S</original>
    <variation>C</variation>
    <location>
        <position position="65"/>
    </location>
</feature>
<feature type="sequence variant" id="VAR_062158" description="In dbSNP:rs35731713.">
    <original>E</original>
    <variation>Q</variation>
    <location>
        <position position="160"/>
    </location>
</feature>
<name>NRSN2_HUMAN</name>
<dbReference type="EMBL" id="AL136915">
    <property type="protein sequence ID" value="CAB66849.1"/>
    <property type="molecule type" value="mRNA"/>
</dbReference>
<dbReference type="EMBL" id="AK026982">
    <property type="protein sequence ID" value="BAB15613.1"/>
    <property type="molecule type" value="mRNA"/>
</dbReference>
<dbReference type="EMBL" id="AK290527">
    <property type="protein sequence ID" value="BAF83216.1"/>
    <property type="molecule type" value="mRNA"/>
</dbReference>
<dbReference type="EMBL" id="CR533441">
    <property type="protein sequence ID" value="CAG38472.1"/>
    <property type="molecule type" value="mRNA"/>
</dbReference>
<dbReference type="EMBL" id="AL034548">
    <property type="status" value="NOT_ANNOTATED_CDS"/>
    <property type="molecule type" value="Genomic_DNA"/>
</dbReference>
<dbReference type="EMBL" id="CH471133">
    <property type="protein sequence ID" value="EAX10680.1"/>
    <property type="molecule type" value="Genomic_DNA"/>
</dbReference>
<dbReference type="EMBL" id="BC001963">
    <property type="protein sequence ID" value="AAH01963.1"/>
    <property type="molecule type" value="mRNA"/>
</dbReference>
<dbReference type="CCDS" id="CCDS12996.1"/>
<dbReference type="RefSeq" id="NP_001310608.1">
    <property type="nucleotide sequence ID" value="NM_001323679.1"/>
</dbReference>
<dbReference type="RefSeq" id="NP_001310609.1">
    <property type="nucleotide sequence ID" value="NM_001323680.2"/>
</dbReference>
<dbReference type="RefSeq" id="NP_001310610.1">
    <property type="nucleotide sequence ID" value="NM_001323681.2"/>
</dbReference>
<dbReference type="RefSeq" id="NP_001310611.1">
    <property type="nucleotide sequence ID" value="NM_001323682.2"/>
</dbReference>
<dbReference type="RefSeq" id="NP_001310612.1">
    <property type="nucleotide sequence ID" value="NM_001323683.2"/>
</dbReference>
<dbReference type="RefSeq" id="NP_001310613.1">
    <property type="nucleotide sequence ID" value="NM_001323684.2"/>
</dbReference>
<dbReference type="RefSeq" id="NP_001310614.1">
    <property type="nucleotide sequence ID" value="NM_001323685.2"/>
</dbReference>
<dbReference type="RefSeq" id="NP_079234.1">
    <property type="nucleotide sequence ID" value="NM_024958.3"/>
</dbReference>
<dbReference type="RefSeq" id="XP_006723693.1">
    <property type="nucleotide sequence ID" value="XM_006723630.3"/>
</dbReference>
<dbReference type="RefSeq" id="XP_011527662.1">
    <property type="nucleotide sequence ID" value="XM_011529360.1"/>
</dbReference>
<dbReference type="RefSeq" id="XP_011527664.1">
    <property type="nucleotide sequence ID" value="XM_011529362.2"/>
</dbReference>
<dbReference type="RefSeq" id="XP_011527665.1">
    <property type="nucleotide sequence ID" value="XM_011529363.2"/>
</dbReference>
<dbReference type="RefSeq" id="XP_016883562.1">
    <property type="nucleotide sequence ID" value="XM_017028073.1"/>
</dbReference>
<dbReference type="RefSeq" id="XP_016883563.1">
    <property type="nucleotide sequence ID" value="XM_017028074.1"/>
</dbReference>
<dbReference type="RefSeq" id="XP_016883564.1">
    <property type="nucleotide sequence ID" value="XM_017028075.1"/>
</dbReference>
<dbReference type="BioGRID" id="123077">
    <property type="interactions" value="15"/>
</dbReference>
<dbReference type="FunCoup" id="Q9GZP1">
    <property type="interactions" value="218"/>
</dbReference>
<dbReference type="IntAct" id="Q9GZP1">
    <property type="interactions" value="18"/>
</dbReference>
<dbReference type="STRING" id="9606.ENSP00000371728"/>
<dbReference type="TCDB" id="8.A.122.1.2">
    <property type="family name" value="the vesicular membrane neurensin/tmem74 (neurensin/tmem74) family"/>
</dbReference>
<dbReference type="iPTMnet" id="Q9GZP1"/>
<dbReference type="PhosphoSitePlus" id="Q9GZP1"/>
<dbReference type="SwissPalm" id="Q9GZP1"/>
<dbReference type="BioMuta" id="NRSN2"/>
<dbReference type="DMDM" id="25008324"/>
<dbReference type="jPOST" id="Q9GZP1"/>
<dbReference type="MassIVE" id="Q9GZP1"/>
<dbReference type="PaxDb" id="9606-ENSP00000371728"/>
<dbReference type="PeptideAtlas" id="Q9GZP1"/>
<dbReference type="ProteomicsDB" id="80104"/>
<dbReference type="Pumba" id="Q9GZP1"/>
<dbReference type="Antibodypedia" id="3000">
    <property type="antibodies" value="170 antibodies from 26 providers"/>
</dbReference>
<dbReference type="DNASU" id="80023"/>
<dbReference type="Ensembl" id="ENST00000382285.7">
    <property type="protein sequence ID" value="ENSP00000371722.2"/>
    <property type="gene ID" value="ENSG00000125841.14"/>
</dbReference>
<dbReference type="Ensembl" id="ENST00000382291.7">
    <property type="protein sequence ID" value="ENSP00000371728.3"/>
    <property type="gene ID" value="ENSG00000125841.14"/>
</dbReference>
<dbReference type="Ensembl" id="ENST00000470439.6">
    <property type="protein sequence ID" value="ENSP00000476925.2"/>
    <property type="gene ID" value="ENSG00000125841.14"/>
</dbReference>
<dbReference type="Ensembl" id="ENST00000714402.1">
    <property type="protein sequence ID" value="ENSP00000519670.1"/>
    <property type="gene ID" value="ENSG00000125841.14"/>
</dbReference>
<dbReference type="Ensembl" id="ENST00000714403.1">
    <property type="protein sequence ID" value="ENSP00000519671.1"/>
    <property type="gene ID" value="ENSG00000125841.14"/>
</dbReference>
<dbReference type="Ensembl" id="ENST00000714404.1">
    <property type="protein sequence ID" value="ENSP00000519672.1"/>
    <property type="gene ID" value="ENSG00000125841.14"/>
</dbReference>
<dbReference type="GeneID" id="80023"/>
<dbReference type="KEGG" id="hsa:80023"/>
<dbReference type="MANE-Select" id="ENST00000382285.7">
    <property type="protein sequence ID" value="ENSP00000371722.2"/>
    <property type="RefSeq nucleotide sequence ID" value="NM_001323682.2"/>
    <property type="RefSeq protein sequence ID" value="NP_001310611.1"/>
</dbReference>
<dbReference type="UCSC" id="uc002wdi.5">
    <property type="organism name" value="human"/>
</dbReference>
<dbReference type="AGR" id="HGNC:16229"/>
<dbReference type="CTD" id="80023"/>
<dbReference type="DisGeNET" id="80023"/>
<dbReference type="GeneCards" id="NRSN2"/>
<dbReference type="HGNC" id="HGNC:16229">
    <property type="gene designation" value="NRSN2"/>
</dbReference>
<dbReference type="HPA" id="ENSG00000125841">
    <property type="expression patterns" value="Tissue enhanced (brain)"/>
</dbReference>
<dbReference type="MIM" id="610666">
    <property type="type" value="gene"/>
</dbReference>
<dbReference type="neXtProt" id="NX_Q9GZP1"/>
<dbReference type="OpenTargets" id="ENSG00000125841"/>
<dbReference type="PharmGKB" id="PA25805"/>
<dbReference type="VEuPathDB" id="HostDB:ENSG00000125841"/>
<dbReference type="eggNOG" id="ENOG502S1MN">
    <property type="taxonomic scope" value="Eukaryota"/>
</dbReference>
<dbReference type="GeneTree" id="ENSGT00530000063877"/>
<dbReference type="HOGENOM" id="CLU_118170_0_0_1"/>
<dbReference type="InParanoid" id="Q9GZP1"/>
<dbReference type="OMA" id="CWKITLS"/>
<dbReference type="OrthoDB" id="5979667at2759"/>
<dbReference type="PAN-GO" id="Q9GZP1">
    <property type="GO annotations" value="4 GO annotations based on evolutionary models"/>
</dbReference>
<dbReference type="PhylomeDB" id="Q9GZP1"/>
<dbReference type="TreeFam" id="TF332090"/>
<dbReference type="PathwayCommons" id="Q9GZP1"/>
<dbReference type="SignaLink" id="Q9GZP1"/>
<dbReference type="BioGRID-ORCS" id="80023">
    <property type="hits" value="12 hits in 1152 CRISPR screens"/>
</dbReference>
<dbReference type="ChiTaRS" id="NRSN2">
    <property type="organism name" value="human"/>
</dbReference>
<dbReference type="GeneWiki" id="NRSN2"/>
<dbReference type="GenomeRNAi" id="80023"/>
<dbReference type="Pharos" id="Q9GZP1">
    <property type="development level" value="Tbio"/>
</dbReference>
<dbReference type="PRO" id="PR:Q9GZP1"/>
<dbReference type="Proteomes" id="UP000005640">
    <property type="component" value="Chromosome 20"/>
</dbReference>
<dbReference type="RNAct" id="Q9GZP1">
    <property type="molecule type" value="protein"/>
</dbReference>
<dbReference type="Bgee" id="ENSG00000125841">
    <property type="expression patterns" value="Expressed in right frontal lobe and 120 other cell types or tissues"/>
</dbReference>
<dbReference type="ExpressionAtlas" id="Q9GZP1">
    <property type="expression patterns" value="baseline and differential"/>
</dbReference>
<dbReference type="GO" id="GO:0043005">
    <property type="term" value="C:neuron projection"/>
    <property type="evidence" value="ECO:0000318"/>
    <property type="project" value="GO_Central"/>
</dbReference>
<dbReference type="GO" id="GO:0043025">
    <property type="term" value="C:neuronal cell body"/>
    <property type="evidence" value="ECO:0000318"/>
    <property type="project" value="GO_Central"/>
</dbReference>
<dbReference type="GO" id="GO:0005886">
    <property type="term" value="C:plasma membrane"/>
    <property type="evidence" value="ECO:0000314"/>
    <property type="project" value="LIFEdb"/>
</dbReference>
<dbReference type="GO" id="GO:0030133">
    <property type="term" value="C:transport vesicle"/>
    <property type="evidence" value="ECO:0000250"/>
    <property type="project" value="UniProtKB"/>
</dbReference>
<dbReference type="GO" id="GO:0007399">
    <property type="term" value="P:nervous system development"/>
    <property type="evidence" value="ECO:0000318"/>
    <property type="project" value="GO_Central"/>
</dbReference>
<dbReference type="InterPro" id="IPR024883">
    <property type="entry name" value="Neurensin"/>
</dbReference>
<dbReference type="PANTHER" id="PTHR14796">
    <property type="entry name" value="NEURENSIN 1-RELATED"/>
    <property type="match status" value="1"/>
</dbReference>
<dbReference type="PANTHER" id="PTHR14796:SF5">
    <property type="entry name" value="NEURENSIN-2"/>
    <property type="match status" value="1"/>
</dbReference>
<dbReference type="Pfam" id="PF14927">
    <property type="entry name" value="Neurensin"/>
    <property type="match status" value="1"/>
</dbReference>
<organism>
    <name type="scientific">Homo sapiens</name>
    <name type="common">Human</name>
    <dbReference type="NCBI Taxonomy" id="9606"/>
    <lineage>
        <taxon>Eukaryota</taxon>
        <taxon>Metazoa</taxon>
        <taxon>Chordata</taxon>
        <taxon>Craniata</taxon>
        <taxon>Vertebrata</taxon>
        <taxon>Euteleostomi</taxon>
        <taxon>Mammalia</taxon>
        <taxon>Eutheria</taxon>
        <taxon>Euarchontoglires</taxon>
        <taxon>Primates</taxon>
        <taxon>Haplorrhini</taxon>
        <taxon>Catarrhini</taxon>
        <taxon>Hominidae</taxon>
        <taxon>Homo</taxon>
    </lineage>
</organism>
<gene>
    <name type="primary">NRSN2</name>
    <name type="synonym">C20orf98</name>
</gene>
<keyword id="KW-0472">Membrane</keyword>
<keyword id="KW-1267">Proteomics identification</keyword>
<keyword id="KW-1185">Reference proteome</keyword>
<keyword id="KW-0812">Transmembrane</keyword>
<keyword id="KW-1133">Transmembrane helix</keyword>
<proteinExistence type="evidence at protein level"/>
<reference key="1">
    <citation type="journal article" date="2001" name="Genome Res.">
        <title>Towards a catalog of human genes and proteins: sequencing and analysis of 500 novel complete protein coding human cDNAs.</title>
        <authorList>
            <person name="Wiemann S."/>
            <person name="Weil B."/>
            <person name="Wellenreuther R."/>
            <person name="Gassenhuber J."/>
            <person name="Glassl S."/>
            <person name="Ansorge W."/>
            <person name="Boecher M."/>
            <person name="Bloecker H."/>
            <person name="Bauersachs S."/>
            <person name="Blum H."/>
            <person name="Lauber J."/>
            <person name="Duesterhoeft A."/>
            <person name="Beyer A."/>
            <person name="Koehrer K."/>
            <person name="Strack N."/>
            <person name="Mewes H.-W."/>
            <person name="Ottenwaelder B."/>
            <person name="Obermaier B."/>
            <person name="Tampe J."/>
            <person name="Heubner D."/>
            <person name="Wambutt R."/>
            <person name="Korn B."/>
            <person name="Klein M."/>
            <person name="Poustka A."/>
        </authorList>
    </citation>
    <scope>NUCLEOTIDE SEQUENCE [LARGE SCALE MRNA]</scope>
    <source>
        <tissue>Uterus</tissue>
    </source>
</reference>
<reference key="2">
    <citation type="journal article" date="2004" name="Nat. Genet.">
        <title>Complete sequencing and characterization of 21,243 full-length human cDNAs.</title>
        <authorList>
            <person name="Ota T."/>
            <person name="Suzuki Y."/>
            <person name="Nishikawa T."/>
            <person name="Otsuki T."/>
            <person name="Sugiyama T."/>
            <person name="Irie R."/>
            <person name="Wakamatsu A."/>
            <person name="Hayashi K."/>
            <person name="Sato H."/>
            <person name="Nagai K."/>
            <person name="Kimura K."/>
            <person name="Makita H."/>
            <person name="Sekine M."/>
            <person name="Obayashi M."/>
            <person name="Nishi T."/>
            <person name="Shibahara T."/>
            <person name="Tanaka T."/>
            <person name="Ishii S."/>
            <person name="Yamamoto J."/>
            <person name="Saito K."/>
            <person name="Kawai Y."/>
            <person name="Isono Y."/>
            <person name="Nakamura Y."/>
            <person name="Nagahari K."/>
            <person name="Murakami K."/>
            <person name="Yasuda T."/>
            <person name="Iwayanagi T."/>
            <person name="Wagatsuma M."/>
            <person name="Shiratori A."/>
            <person name="Sudo H."/>
            <person name="Hosoiri T."/>
            <person name="Kaku Y."/>
            <person name="Kodaira H."/>
            <person name="Kondo H."/>
            <person name="Sugawara M."/>
            <person name="Takahashi M."/>
            <person name="Kanda K."/>
            <person name="Yokoi T."/>
            <person name="Furuya T."/>
            <person name="Kikkawa E."/>
            <person name="Omura Y."/>
            <person name="Abe K."/>
            <person name="Kamihara K."/>
            <person name="Katsuta N."/>
            <person name="Sato K."/>
            <person name="Tanikawa M."/>
            <person name="Yamazaki M."/>
            <person name="Ninomiya K."/>
            <person name="Ishibashi T."/>
            <person name="Yamashita H."/>
            <person name="Murakawa K."/>
            <person name="Fujimori K."/>
            <person name="Tanai H."/>
            <person name="Kimata M."/>
            <person name="Watanabe M."/>
            <person name="Hiraoka S."/>
            <person name="Chiba Y."/>
            <person name="Ishida S."/>
            <person name="Ono Y."/>
            <person name="Takiguchi S."/>
            <person name="Watanabe S."/>
            <person name="Yosida M."/>
            <person name="Hotuta T."/>
            <person name="Kusano J."/>
            <person name="Kanehori K."/>
            <person name="Takahashi-Fujii A."/>
            <person name="Hara H."/>
            <person name="Tanase T.-O."/>
            <person name="Nomura Y."/>
            <person name="Togiya S."/>
            <person name="Komai F."/>
            <person name="Hara R."/>
            <person name="Takeuchi K."/>
            <person name="Arita M."/>
            <person name="Imose N."/>
            <person name="Musashino K."/>
            <person name="Yuuki H."/>
            <person name="Oshima A."/>
            <person name="Sasaki N."/>
            <person name="Aotsuka S."/>
            <person name="Yoshikawa Y."/>
            <person name="Matsunawa H."/>
            <person name="Ichihara T."/>
            <person name="Shiohata N."/>
            <person name="Sano S."/>
            <person name="Moriya S."/>
            <person name="Momiyama H."/>
            <person name="Satoh N."/>
            <person name="Takami S."/>
            <person name="Terashima Y."/>
            <person name="Suzuki O."/>
            <person name="Nakagawa S."/>
            <person name="Senoh A."/>
            <person name="Mizoguchi H."/>
            <person name="Goto Y."/>
            <person name="Shimizu F."/>
            <person name="Wakebe H."/>
            <person name="Hishigaki H."/>
            <person name="Watanabe T."/>
            <person name="Sugiyama A."/>
            <person name="Takemoto M."/>
            <person name="Kawakami B."/>
            <person name="Yamazaki M."/>
            <person name="Watanabe K."/>
            <person name="Kumagai A."/>
            <person name="Itakura S."/>
            <person name="Fukuzumi Y."/>
            <person name="Fujimori Y."/>
            <person name="Komiyama M."/>
            <person name="Tashiro H."/>
            <person name="Tanigami A."/>
            <person name="Fujiwara T."/>
            <person name="Ono T."/>
            <person name="Yamada K."/>
            <person name="Fujii Y."/>
            <person name="Ozaki K."/>
            <person name="Hirao M."/>
            <person name="Ohmori Y."/>
            <person name="Kawabata A."/>
            <person name="Hikiji T."/>
            <person name="Kobatake N."/>
            <person name="Inagaki H."/>
            <person name="Ikema Y."/>
            <person name="Okamoto S."/>
            <person name="Okitani R."/>
            <person name="Kawakami T."/>
            <person name="Noguchi S."/>
            <person name="Itoh T."/>
            <person name="Shigeta K."/>
            <person name="Senba T."/>
            <person name="Matsumura K."/>
            <person name="Nakajima Y."/>
            <person name="Mizuno T."/>
            <person name="Morinaga M."/>
            <person name="Sasaki M."/>
            <person name="Togashi T."/>
            <person name="Oyama M."/>
            <person name="Hata H."/>
            <person name="Watanabe M."/>
            <person name="Komatsu T."/>
            <person name="Mizushima-Sugano J."/>
            <person name="Satoh T."/>
            <person name="Shirai Y."/>
            <person name="Takahashi Y."/>
            <person name="Nakagawa K."/>
            <person name="Okumura K."/>
            <person name="Nagase T."/>
            <person name="Nomura N."/>
            <person name="Kikuchi H."/>
            <person name="Masuho Y."/>
            <person name="Yamashita R."/>
            <person name="Nakai K."/>
            <person name="Yada T."/>
            <person name="Nakamura Y."/>
            <person name="Ohara O."/>
            <person name="Isogai T."/>
            <person name="Sugano S."/>
        </authorList>
    </citation>
    <scope>NUCLEOTIDE SEQUENCE [LARGE SCALE MRNA]</scope>
    <source>
        <tissue>Brain</tissue>
    </source>
</reference>
<reference key="3">
    <citation type="submission" date="2004-06" db="EMBL/GenBank/DDBJ databases">
        <title>Cloning of human full open reading frames in Gateway(TM) system entry vector (pDONR201).</title>
        <authorList>
            <person name="Ebert L."/>
            <person name="Schick M."/>
            <person name="Neubert P."/>
            <person name="Schatten R."/>
            <person name="Henze S."/>
            <person name="Korn B."/>
        </authorList>
    </citation>
    <scope>NUCLEOTIDE SEQUENCE [LARGE SCALE MRNA]</scope>
</reference>
<reference key="4">
    <citation type="journal article" date="2001" name="Nature">
        <title>The DNA sequence and comparative analysis of human chromosome 20.</title>
        <authorList>
            <person name="Deloukas P."/>
            <person name="Matthews L.H."/>
            <person name="Ashurst J.L."/>
            <person name="Burton J."/>
            <person name="Gilbert J.G.R."/>
            <person name="Jones M."/>
            <person name="Stavrides G."/>
            <person name="Almeida J.P."/>
            <person name="Babbage A.K."/>
            <person name="Bagguley C.L."/>
            <person name="Bailey J."/>
            <person name="Barlow K.F."/>
            <person name="Bates K.N."/>
            <person name="Beard L.M."/>
            <person name="Beare D.M."/>
            <person name="Beasley O.P."/>
            <person name="Bird C.P."/>
            <person name="Blakey S.E."/>
            <person name="Bridgeman A.M."/>
            <person name="Brown A.J."/>
            <person name="Buck D."/>
            <person name="Burrill W.D."/>
            <person name="Butler A.P."/>
            <person name="Carder C."/>
            <person name="Carter N.P."/>
            <person name="Chapman J.C."/>
            <person name="Clamp M."/>
            <person name="Clark G."/>
            <person name="Clark L.N."/>
            <person name="Clark S.Y."/>
            <person name="Clee C.M."/>
            <person name="Clegg S."/>
            <person name="Cobley V.E."/>
            <person name="Collier R.E."/>
            <person name="Connor R.E."/>
            <person name="Corby N.R."/>
            <person name="Coulson A."/>
            <person name="Coville G.J."/>
            <person name="Deadman R."/>
            <person name="Dhami P.D."/>
            <person name="Dunn M."/>
            <person name="Ellington A.G."/>
            <person name="Frankland J.A."/>
            <person name="Fraser A."/>
            <person name="French L."/>
            <person name="Garner P."/>
            <person name="Grafham D.V."/>
            <person name="Griffiths C."/>
            <person name="Griffiths M.N.D."/>
            <person name="Gwilliam R."/>
            <person name="Hall R.E."/>
            <person name="Hammond S."/>
            <person name="Harley J.L."/>
            <person name="Heath P.D."/>
            <person name="Ho S."/>
            <person name="Holden J.L."/>
            <person name="Howden P.J."/>
            <person name="Huckle E."/>
            <person name="Hunt A.R."/>
            <person name="Hunt S.E."/>
            <person name="Jekosch K."/>
            <person name="Johnson C.M."/>
            <person name="Johnson D."/>
            <person name="Kay M.P."/>
            <person name="Kimberley A.M."/>
            <person name="King A."/>
            <person name="Knights A."/>
            <person name="Laird G.K."/>
            <person name="Lawlor S."/>
            <person name="Lehvaeslaiho M.H."/>
            <person name="Leversha M.A."/>
            <person name="Lloyd C."/>
            <person name="Lloyd D.M."/>
            <person name="Lovell J.D."/>
            <person name="Marsh V.L."/>
            <person name="Martin S.L."/>
            <person name="McConnachie L.J."/>
            <person name="McLay K."/>
            <person name="McMurray A.A."/>
            <person name="Milne S.A."/>
            <person name="Mistry D."/>
            <person name="Moore M.J.F."/>
            <person name="Mullikin J.C."/>
            <person name="Nickerson T."/>
            <person name="Oliver K."/>
            <person name="Parker A."/>
            <person name="Patel R."/>
            <person name="Pearce T.A.V."/>
            <person name="Peck A.I."/>
            <person name="Phillimore B.J.C.T."/>
            <person name="Prathalingam S.R."/>
            <person name="Plumb R.W."/>
            <person name="Ramsay H."/>
            <person name="Rice C.M."/>
            <person name="Ross M.T."/>
            <person name="Scott C.E."/>
            <person name="Sehra H.K."/>
            <person name="Shownkeen R."/>
            <person name="Sims S."/>
            <person name="Skuce C.D."/>
            <person name="Smith M.L."/>
            <person name="Soderlund C."/>
            <person name="Steward C.A."/>
            <person name="Sulston J.E."/>
            <person name="Swann R.M."/>
            <person name="Sycamore N."/>
            <person name="Taylor R."/>
            <person name="Tee L."/>
            <person name="Thomas D.W."/>
            <person name="Thorpe A."/>
            <person name="Tracey A."/>
            <person name="Tromans A.C."/>
            <person name="Vaudin M."/>
            <person name="Wall M."/>
            <person name="Wallis J.M."/>
            <person name="Whitehead S.L."/>
            <person name="Whittaker P."/>
            <person name="Willey D.L."/>
            <person name="Williams L."/>
            <person name="Williams S.A."/>
            <person name="Wilming L."/>
            <person name="Wray P.W."/>
            <person name="Hubbard T."/>
            <person name="Durbin R.M."/>
            <person name="Bentley D.R."/>
            <person name="Beck S."/>
            <person name="Rogers J."/>
        </authorList>
    </citation>
    <scope>NUCLEOTIDE SEQUENCE [LARGE SCALE GENOMIC DNA]</scope>
</reference>
<reference key="5">
    <citation type="submission" date="2005-09" db="EMBL/GenBank/DDBJ databases">
        <authorList>
            <person name="Mural R.J."/>
            <person name="Istrail S."/>
            <person name="Sutton G.G."/>
            <person name="Florea L."/>
            <person name="Halpern A.L."/>
            <person name="Mobarry C.M."/>
            <person name="Lippert R."/>
            <person name="Walenz B."/>
            <person name="Shatkay H."/>
            <person name="Dew I."/>
            <person name="Miller J.R."/>
            <person name="Flanigan M.J."/>
            <person name="Edwards N.J."/>
            <person name="Bolanos R."/>
            <person name="Fasulo D."/>
            <person name="Halldorsson B.V."/>
            <person name="Hannenhalli S."/>
            <person name="Turner R."/>
            <person name="Yooseph S."/>
            <person name="Lu F."/>
            <person name="Nusskern D.R."/>
            <person name="Shue B.C."/>
            <person name="Zheng X.H."/>
            <person name="Zhong F."/>
            <person name="Delcher A.L."/>
            <person name="Huson D.H."/>
            <person name="Kravitz S.A."/>
            <person name="Mouchard L."/>
            <person name="Reinert K."/>
            <person name="Remington K.A."/>
            <person name="Clark A.G."/>
            <person name="Waterman M.S."/>
            <person name="Eichler E.E."/>
            <person name="Adams M.D."/>
            <person name="Hunkapiller M.W."/>
            <person name="Myers E.W."/>
            <person name="Venter J.C."/>
        </authorList>
    </citation>
    <scope>NUCLEOTIDE SEQUENCE [LARGE SCALE GENOMIC DNA]</scope>
</reference>
<reference key="6">
    <citation type="journal article" date="2004" name="Genome Res.">
        <title>The status, quality, and expansion of the NIH full-length cDNA project: the Mammalian Gene Collection (MGC).</title>
        <authorList>
            <consortium name="The MGC Project Team"/>
        </authorList>
    </citation>
    <scope>NUCLEOTIDE SEQUENCE [LARGE SCALE MRNA]</scope>
    <source>
        <tissue>Placenta</tissue>
    </source>
</reference>
<accession>Q9GZP1</accession>
<accession>A8K3B2</accession>
<accession>Q6FII5</accession>
<accession>Q9NUD3</accession>
<protein>
    <recommendedName>
        <fullName>Neurensin-2</fullName>
    </recommendedName>
</protein>